<evidence type="ECO:0000250" key="1">
    <source>
        <dbReference type="UniProtKB" id="O00255"/>
    </source>
</evidence>
<evidence type="ECO:0000250" key="2">
    <source>
        <dbReference type="UniProtKB" id="O88559"/>
    </source>
</evidence>
<evidence type="ECO:0000256" key="3">
    <source>
        <dbReference type="SAM" id="MobiDB-lite"/>
    </source>
</evidence>
<evidence type="ECO:0000269" key="4">
    <source>
    </source>
</evidence>
<evidence type="ECO:0000269" key="5">
    <source>
    </source>
</evidence>
<evidence type="ECO:0000269" key="6">
    <source>
    </source>
</evidence>
<evidence type="ECO:0000305" key="7"/>
<evidence type="ECO:0007744" key="8">
    <source>
    </source>
</evidence>
<reference key="1">
    <citation type="journal article" date="1999" name="Mol. Cell. Endocrinol.">
        <title>Structure and distribution of rat menin mRNA.</title>
        <authorList>
            <person name="Maruyama K."/>
            <person name="Tsukada T."/>
            <person name="Hosono T."/>
            <person name="Ohkura N."/>
            <person name="Kishi M."/>
            <person name="Honda M."/>
            <person name="Nara-Ashizawa N."/>
            <person name="Nagasaki K."/>
            <person name="Yamaguchi K."/>
        </authorList>
    </citation>
    <scope>NUCLEOTIDE SEQUENCE [MRNA] (ISOFORM 1)</scope>
    <scope>SUBCELLULAR LOCATION</scope>
    <scope>TISSUE SPECIFICITY</scope>
    <scope>DEVELOPMENTAL STAGE</scope>
    <source>
        <strain>Wistar</strain>
        <tissue>Brain</tissue>
    </source>
</reference>
<reference key="2">
    <citation type="journal article" date="1999" name="Biochim. Biophys. Acta">
        <title>Primary structure, gene expression and chromosomal mapping of rodent homologs of the MEN1 tumor suppressor gene.</title>
        <authorList>
            <person name="Karges W."/>
            <person name="Maier S."/>
            <person name="Wissmann A."/>
            <person name="Dralle H."/>
            <person name="Dosch H.M."/>
            <person name="Boehm B.O."/>
        </authorList>
    </citation>
    <scope>NUCLEOTIDE SEQUENCE [MRNA] (ISOFORM 1)</scope>
    <scope>TISSUE SPECIFICITY</scope>
    <source>
        <strain>Wistar</strain>
    </source>
</reference>
<reference key="3">
    <citation type="submission" date="2005-07" db="EMBL/GenBank/DDBJ databases">
        <authorList>
            <person name="Mural R.J."/>
            <person name="Adams M.D."/>
            <person name="Myers E.W."/>
            <person name="Smith H.O."/>
            <person name="Venter J.C."/>
        </authorList>
    </citation>
    <scope>NUCLEOTIDE SEQUENCE [LARGE SCALE GENOMIC DNA]</scope>
</reference>
<reference key="4">
    <citation type="journal article" date="2001" name="Proc. Natl. Acad. Sci. U.S.A.">
        <title>Inactivation of menin, a Smad3-interacting protein, blocks transforming growth factor type beta signaling.</title>
        <authorList>
            <person name="Kaji H."/>
            <person name="Canaff L."/>
            <person name="Lebrun J.J."/>
            <person name="Goltzman D."/>
            <person name="Hendy G.N."/>
        </authorList>
    </citation>
    <scope>FUNCTION</scope>
    <scope>INTERACTION WITH SMAD3</scope>
    <scope>INDUCTION BY TGFB1</scope>
</reference>
<reference key="5">
    <citation type="journal article" date="2012" name="Nat. Commun.">
        <title>Quantitative maps of protein phosphorylation sites across 14 different rat organs and tissues.</title>
        <authorList>
            <person name="Lundby A."/>
            <person name="Secher A."/>
            <person name="Lage K."/>
            <person name="Nordsborg N.B."/>
            <person name="Dmytriyev A."/>
            <person name="Lundby C."/>
            <person name="Olsen J.V."/>
        </authorList>
    </citation>
    <scope>PHOSPHORYLATION [LARGE SCALE ANALYSIS] AT SER-543</scope>
    <scope>IDENTIFICATION BY MASS SPECTROMETRY [LARGE SCALE ANALYSIS]</scope>
</reference>
<dbReference type="EMBL" id="AB023400">
    <property type="protein sequence ID" value="BAA82134.1"/>
    <property type="molecule type" value="mRNA"/>
</dbReference>
<dbReference type="EMBL" id="AF130369">
    <property type="protein sequence ID" value="AAF01353.1"/>
    <property type="molecule type" value="mRNA"/>
</dbReference>
<dbReference type="EMBL" id="AF130370">
    <property type="protein sequence ID" value="AAF01354.1"/>
    <property type="molecule type" value="mRNA"/>
</dbReference>
<dbReference type="EMBL" id="CH473953">
    <property type="protein sequence ID" value="EDM12593.1"/>
    <property type="molecule type" value="Genomic_DNA"/>
</dbReference>
<dbReference type="EMBL" id="CH473953">
    <property type="protein sequence ID" value="EDM12594.1"/>
    <property type="molecule type" value="Genomic_DNA"/>
</dbReference>
<dbReference type="EMBL" id="CH473953">
    <property type="protein sequence ID" value="EDM12595.1"/>
    <property type="molecule type" value="Genomic_DNA"/>
</dbReference>
<dbReference type="RefSeq" id="NP_062081.1">
    <molecule id="Q9WVR8-1"/>
    <property type="nucleotide sequence ID" value="NM_019208.3"/>
</dbReference>
<dbReference type="RefSeq" id="XP_006230832.1">
    <molecule id="Q9WVR8-1"/>
    <property type="nucleotide sequence ID" value="XM_006230770.5"/>
</dbReference>
<dbReference type="RefSeq" id="XP_006230833.1">
    <molecule id="Q9WVR8-1"/>
    <property type="nucleotide sequence ID" value="XM_006230771.5"/>
</dbReference>
<dbReference type="RefSeq" id="XP_006230834.1">
    <molecule id="Q9WVR8-1"/>
    <property type="nucleotide sequence ID" value="XM_006230772.5"/>
</dbReference>
<dbReference type="SMR" id="Q9WVR8"/>
<dbReference type="FunCoup" id="Q9WVR8">
    <property type="interactions" value="3234"/>
</dbReference>
<dbReference type="STRING" id="10116.ENSRNOP00000028592"/>
<dbReference type="GlyGen" id="Q9WVR8">
    <property type="glycosylation" value="1 site"/>
</dbReference>
<dbReference type="iPTMnet" id="Q9WVR8"/>
<dbReference type="PhosphoSitePlus" id="Q9WVR8"/>
<dbReference type="PaxDb" id="10116-ENSRNOP00000028592"/>
<dbReference type="Ensembl" id="ENSRNOT00000099846.1">
    <molecule id="Q9WVR8-2"/>
    <property type="protein sequence ID" value="ENSRNOP00000076697.1"/>
    <property type="gene ID" value="ENSRNOG00000021054.8"/>
</dbReference>
<dbReference type="GeneID" id="29417"/>
<dbReference type="KEGG" id="rno:29417"/>
<dbReference type="UCSC" id="RGD:3078">
    <molecule id="Q9WVR8-1"/>
    <property type="organism name" value="rat"/>
</dbReference>
<dbReference type="AGR" id="RGD:3078"/>
<dbReference type="CTD" id="4221"/>
<dbReference type="RGD" id="3078">
    <property type="gene designation" value="Men1"/>
</dbReference>
<dbReference type="VEuPathDB" id="HostDB:ENSRNOG00000021054"/>
<dbReference type="eggNOG" id="ENOG502QUYK">
    <property type="taxonomic scope" value="Eukaryota"/>
</dbReference>
<dbReference type="GeneTree" id="ENSGT00390000014237"/>
<dbReference type="HOGENOM" id="CLU_018646_0_0_1"/>
<dbReference type="InParanoid" id="Q9WVR8"/>
<dbReference type="OrthoDB" id="5962932at2759"/>
<dbReference type="PhylomeDB" id="Q9WVR8"/>
<dbReference type="Reactome" id="R-RNO-2173796">
    <property type="pathway name" value="SMAD2/SMAD3:SMAD4 heterotrimer regulates transcription"/>
</dbReference>
<dbReference type="Reactome" id="R-RNO-381426">
    <property type="pathway name" value="Regulation of Insulin-like Growth Factor (IGF) transport and uptake by Insulin-like Growth Factor Binding Proteins (IGFBPs)"/>
</dbReference>
<dbReference type="Reactome" id="R-RNO-8957275">
    <property type="pathway name" value="Post-translational protein phosphorylation"/>
</dbReference>
<dbReference type="Reactome" id="R-RNO-9772755">
    <property type="pathway name" value="Formation of WDR5-containing histone-modifying complexes"/>
</dbReference>
<dbReference type="PRO" id="PR:Q9WVR8"/>
<dbReference type="Proteomes" id="UP000002494">
    <property type="component" value="Chromosome 1"/>
</dbReference>
<dbReference type="Proteomes" id="UP000234681">
    <property type="component" value="Chromosome 1"/>
</dbReference>
<dbReference type="Bgee" id="ENSRNOG00000021054">
    <property type="expression patterns" value="Expressed in cerebellum and 20 other cell types or tissues"/>
</dbReference>
<dbReference type="GO" id="GO:0000785">
    <property type="term" value="C:chromatin"/>
    <property type="evidence" value="ECO:0000266"/>
    <property type="project" value="RGD"/>
</dbReference>
<dbReference type="GO" id="GO:0000781">
    <property type="term" value="C:chromosome, telomeric region"/>
    <property type="evidence" value="ECO:0000266"/>
    <property type="project" value="RGD"/>
</dbReference>
<dbReference type="GO" id="GO:0032154">
    <property type="term" value="C:cleavage furrow"/>
    <property type="evidence" value="ECO:0000266"/>
    <property type="project" value="RGD"/>
</dbReference>
<dbReference type="GO" id="GO:0005737">
    <property type="term" value="C:cytoplasm"/>
    <property type="evidence" value="ECO:0000266"/>
    <property type="project" value="RGD"/>
</dbReference>
<dbReference type="GO" id="GO:0005829">
    <property type="term" value="C:cytosol"/>
    <property type="evidence" value="ECO:0000266"/>
    <property type="project" value="RGD"/>
</dbReference>
<dbReference type="GO" id="GO:0035097">
    <property type="term" value="C:histone methyltransferase complex"/>
    <property type="evidence" value="ECO:0000266"/>
    <property type="project" value="RGD"/>
</dbReference>
<dbReference type="GO" id="GO:0071339">
    <property type="term" value="C:MLL1 complex"/>
    <property type="evidence" value="ECO:0000266"/>
    <property type="project" value="RGD"/>
</dbReference>
<dbReference type="GO" id="GO:0044665">
    <property type="term" value="C:MLL1/2 complex"/>
    <property type="evidence" value="ECO:0000266"/>
    <property type="project" value="RGD"/>
</dbReference>
<dbReference type="GO" id="GO:0016363">
    <property type="term" value="C:nuclear matrix"/>
    <property type="evidence" value="ECO:0000266"/>
    <property type="project" value="RGD"/>
</dbReference>
<dbReference type="GO" id="GO:0005634">
    <property type="term" value="C:nucleus"/>
    <property type="evidence" value="ECO:0000314"/>
    <property type="project" value="UniProtKB"/>
</dbReference>
<dbReference type="GO" id="GO:0032991">
    <property type="term" value="C:protein-containing complex"/>
    <property type="evidence" value="ECO:0000266"/>
    <property type="project" value="RGD"/>
</dbReference>
<dbReference type="GO" id="GO:0017053">
    <property type="term" value="C:transcription repressor complex"/>
    <property type="evidence" value="ECO:0000266"/>
    <property type="project" value="RGD"/>
</dbReference>
<dbReference type="GO" id="GO:0003682">
    <property type="term" value="F:chromatin binding"/>
    <property type="evidence" value="ECO:0000314"/>
    <property type="project" value="RGD"/>
</dbReference>
<dbReference type="GO" id="GO:0003677">
    <property type="term" value="F:DNA binding"/>
    <property type="evidence" value="ECO:0000266"/>
    <property type="project" value="RGD"/>
</dbReference>
<dbReference type="GO" id="GO:0001216">
    <property type="term" value="F:DNA-binding transcription activator activity"/>
    <property type="evidence" value="ECO:0000266"/>
    <property type="project" value="RGD"/>
</dbReference>
<dbReference type="GO" id="GO:0003690">
    <property type="term" value="F:double-stranded DNA binding"/>
    <property type="evidence" value="ECO:0000266"/>
    <property type="project" value="RGD"/>
</dbReference>
<dbReference type="GO" id="GO:0000400">
    <property type="term" value="F:four-way junction DNA binding"/>
    <property type="evidence" value="ECO:0000266"/>
    <property type="project" value="RGD"/>
</dbReference>
<dbReference type="GO" id="GO:0051219">
    <property type="term" value="F:phosphoprotein binding"/>
    <property type="evidence" value="ECO:0000266"/>
    <property type="project" value="RGD"/>
</dbReference>
<dbReference type="GO" id="GO:0030674">
    <property type="term" value="F:protein-macromolecule adaptor activity"/>
    <property type="evidence" value="ECO:0000266"/>
    <property type="project" value="RGD"/>
</dbReference>
<dbReference type="GO" id="GO:0070412">
    <property type="term" value="F:R-SMAD binding"/>
    <property type="evidence" value="ECO:0000266"/>
    <property type="project" value="RGD"/>
</dbReference>
<dbReference type="GO" id="GO:0043565">
    <property type="term" value="F:sequence-specific DNA binding"/>
    <property type="evidence" value="ECO:0000266"/>
    <property type="project" value="RGD"/>
</dbReference>
<dbReference type="GO" id="GO:0000976">
    <property type="term" value="F:transcription cis-regulatory region binding"/>
    <property type="evidence" value="ECO:0000266"/>
    <property type="project" value="RGD"/>
</dbReference>
<dbReference type="GO" id="GO:0000403">
    <property type="term" value="F:Y-form DNA binding"/>
    <property type="evidence" value="ECO:0000266"/>
    <property type="project" value="RGD"/>
</dbReference>
<dbReference type="GO" id="GO:0051301">
    <property type="term" value="P:cell division"/>
    <property type="evidence" value="ECO:0000266"/>
    <property type="project" value="RGD"/>
</dbReference>
<dbReference type="GO" id="GO:0008283">
    <property type="term" value="P:cell population proliferation"/>
    <property type="evidence" value="ECO:0000266"/>
    <property type="project" value="RGD"/>
</dbReference>
<dbReference type="GO" id="GO:0071333">
    <property type="term" value="P:cellular response to glucose stimulus"/>
    <property type="evidence" value="ECO:0000270"/>
    <property type="project" value="RGD"/>
</dbReference>
<dbReference type="GO" id="GO:0071375">
    <property type="term" value="P:cellular response to peptide hormone stimulus"/>
    <property type="evidence" value="ECO:0000270"/>
    <property type="project" value="RGD"/>
</dbReference>
<dbReference type="GO" id="GO:0006338">
    <property type="term" value="P:chromatin remodeling"/>
    <property type="evidence" value="ECO:0000266"/>
    <property type="project" value="RGD"/>
</dbReference>
<dbReference type="GO" id="GO:0046697">
    <property type="term" value="P:decidualization"/>
    <property type="evidence" value="ECO:0000270"/>
    <property type="project" value="RGD"/>
</dbReference>
<dbReference type="GO" id="GO:0006974">
    <property type="term" value="P:DNA damage response"/>
    <property type="evidence" value="ECO:0000266"/>
    <property type="project" value="RGD"/>
</dbReference>
<dbReference type="GO" id="GO:0048704">
    <property type="term" value="P:embryonic skeletal system morphogenesis"/>
    <property type="evidence" value="ECO:0000266"/>
    <property type="project" value="RGD"/>
</dbReference>
<dbReference type="GO" id="GO:0044346">
    <property type="term" value="P:fibroblast apoptotic process"/>
    <property type="evidence" value="ECO:0000266"/>
    <property type="project" value="RGD"/>
</dbReference>
<dbReference type="GO" id="GO:0048144">
    <property type="term" value="P:fibroblast proliferation"/>
    <property type="evidence" value="ECO:0000266"/>
    <property type="project" value="RGD"/>
</dbReference>
<dbReference type="GO" id="GO:0030097">
    <property type="term" value="P:hemopoiesis"/>
    <property type="evidence" value="ECO:0000266"/>
    <property type="project" value="RGD"/>
</dbReference>
<dbReference type="GO" id="GO:0001776">
    <property type="term" value="P:leukocyte homeostasis"/>
    <property type="evidence" value="ECO:0000266"/>
    <property type="project" value="RGD"/>
</dbReference>
<dbReference type="GO" id="GO:0000165">
    <property type="term" value="P:MAPK cascade"/>
    <property type="evidence" value="ECO:0000266"/>
    <property type="project" value="RGD"/>
</dbReference>
<dbReference type="GO" id="GO:0060135">
    <property type="term" value="P:maternal process involved in female pregnancy"/>
    <property type="evidence" value="ECO:0000266"/>
    <property type="project" value="RGD"/>
</dbReference>
<dbReference type="GO" id="GO:0045786">
    <property type="term" value="P:negative regulation of cell cycle"/>
    <property type="evidence" value="ECO:0000266"/>
    <property type="project" value="RGD"/>
</dbReference>
<dbReference type="GO" id="GO:1902807">
    <property type="term" value="P:negative regulation of cell cycle G1/S phase transition"/>
    <property type="evidence" value="ECO:0000315"/>
    <property type="project" value="RGD"/>
</dbReference>
<dbReference type="GO" id="GO:0008285">
    <property type="term" value="P:negative regulation of cell population proliferation"/>
    <property type="evidence" value="ECO:0000266"/>
    <property type="project" value="RGD"/>
</dbReference>
<dbReference type="GO" id="GO:0010812">
    <property type="term" value="P:negative regulation of cell-substrate adhesion"/>
    <property type="evidence" value="ECO:0000315"/>
    <property type="project" value="RGD"/>
</dbReference>
<dbReference type="GO" id="GO:0045892">
    <property type="term" value="P:negative regulation of DNA-templated transcription"/>
    <property type="evidence" value="ECO:0000266"/>
    <property type="project" value="RGD"/>
</dbReference>
<dbReference type="GO" id="GO:0050680">
    <property type="term" value="P:negative regulation of epithelial cell proliferation"/>
    <property type="evidence" value="ECO:0000315"/>
    <property type="project" value="RGD"/>
</dbReference>
<dbReference type="GO" id="GO:0048147">
    <property type="term" value="P:negative regulation of fibroblast proliferation"/>
    <property type="evidence" value="ECO:0000266"/>
    <property type="project" value="RGD"/>
</dbReference>
<dbReference type="GO" id="GO:0046329">
    <property type="term" value="P:negative regulation of JNK cascade"/>
    <property type="evidence" value="ECO:0000266"/>
    <property type="project" value="RGD"/>
</dbReference>
<dbReference type="GO" id="GO:0046621">
    <property type="term" value="P:negative regulation of organ growth"/>
    <property type="evidence" value="ECO:0000266"/>
    <property type="project" value="RGD"/>
</dbReference>
<dbReference type="GO" id="GO:0045668">
    <property type="term" value="P:negative regulation of osteoblast differentiation"/>
    <property type="evidence" value="ECO:0000266"/>
    <property type="project" value="RGD"/>
</dbReference>
<dbReference type="GO" id="GO:2000647">
    <property type="term" value="P:negative regulation of stem cell proliferation"/>
    <property type="evidence" value="ECO:0000266"/>
    <property type="project" value="RGD"/>
</dbReference>
<dbReference type="GO" id="GO:0000122">
    <property type="term" value="P:negative regulation of transcription by RNA polymerase II"/>
    <property type="evidence" value="ECO:0000315"/>
    <property type="project" value="RGD"/>
</dbReference>
<dbReference type="GO" id="GO:1904691">
    <property type="term" value="P:negative regulation of type B pancreatic cell proliferation"/>
    <property type="evidence" value="ECO:0000266"/>
    <property type="project" value="RGD"/>
</dbReference>
<dbReference type="GO" id="GO:0035265">
    <property type="term" value="P:organ growth"/>
    <property type="evidence" value="ECO:0000266"/>
    <property type="project" value="RGD"/>
</dbReference>
<dbReference type="GO" id="GO:0001503">
    <property type="term" value="P:ossification"/>
    <property type="evidence" value="ECO:0000266"/>
    <property type="project" value="RGD"/>
</dbReference>
<dbReference type="GO" id="GO:0002076">
    <property type="term" value="P:osteoblast development"/>
    <property type="evidence" value="ECO:0000266"/>
    <property type="project" value="RGD"/>
</dbReference>
<dbReference type="GO" id="GO:0002051">
    <property type="term" value="P:osteoblast fate commitment"/>
    <property type="evidence" value="ECO:0000266"/>
    <property type="project" value="RGD"/>
</dbReference>
<dbReference type="GO" id="GO:0051781">
    <property type="term" value="P:positive regulation of cell division"/>
    <property type="evidence" value="ECO:0000266"/>
    <property type="project" value="RGD"/>
</dbReference>
<dbReference type="GO" id="GO:0045893">
    <property type="term" value="P:positive regulation of DNA-templated transcription"/>
    <property type="evidence" value="ECO:0000266"/>
    <property type="project" value="RGD"/>
</dbReference>
<dbReference type="GO" id="GO:2000271">
    <property type="term" value="P:positive regulation of fibroblast apoptotic process"/>
    <property type="evidence" value="ECO:0000266"/>
    <property type="project" value="RGD"/>
</dbReference>
<dbReference type="GO" id="GO:0010628">
    <property type="term" value="P:positive regulation of gene expression"/>
    <property type="evidence" value="ECO:0000266"/>
    <property type="project" value="RGD"/>
</dbReference>
<dbReference type="GO" id="GO:0045669">
    <property type="term" value="P:positive regulation of osteoblast differentiation"/>
    <property type="evidence" value="ECO:0000266"/>
    <property type="project" value="RGD"/>
</dbReference>
<dbReference type="GO" id="GO:2000738">
    <property type="term" value="P:positive regulation of stem cell differentiation"/>
    <property type="evidence" value="ECO:0000266"/>
    <property type="project" value="RGD"/>
</dbReference>
<dbReference type="GO" id="GO:0045944">
    <property type="term" value="P:positive regulation of transcription by RNA polymerase II"/>
    <property type="evidence" value="ECO:0000315"/>
    <property type="project" value="RGD"/>
</dbReference>
<dbReference type="GO" id="GO:0030511">
    <property type="term" value="P:positive regulation of transforming growth factor beta receptor signaling pathway"/>
    <property type="evidence" value="ECO:0000266"/>
    <property type="project" value="RGD"/>
</dbReference>
<dbReference type="GO" id="GO:0032925">
    <property type="term" value="P:regulation of activin receptor signaling pathway"/>
    <property type="evidence" value="ECO:0000315"/>
    <property type="project" value="RGD"/>
</dbReference>
<dbReference type="GO" id="GO:2000045">
    <property type="term" value="P:regulation of G1/S transition of mitotic cell cycle"/>
    <property type="evidence" value="ECO:0000266"/>
    <property type="project" value="RGD"/>
</dbReference>
<dbReference type="GO" id="GO:0010468">
    <property type="term" value="P:regulation of gene expression"/>
    <property type="evidence" value="ECO:0000266"/>
    <property type="project" value="RGD"/>
</dbReference>
<dbReference type="GO" id="GO:0006357">
    <property type="term" value="P:regulation of transcription by RNA polymerase II"/>
    <property type="evidence" value="ECO:0000318"/>
    <property type="project" value="GO_Central"/>
</dbReference>
<dbReference type="GO" id="GO:0061469">
    <property type="term" value="P:regulation of type B pancreatic cell proliferation"/>
    <property type="evidence" value="ECO:0000315"/>
    <property type="project" value="RGD"/>
</dbReference>
<dbReference type="GO" id="GO:0010332">
    <property type="term" value="P:response to gamma radiation"/>
    <property type="evidence" value="ECO:0000266"/>
    <property type="project" value="RGD"/>
</dbReference>
<dbReference type="GO" id="GO:0071559">
    <property type="term" value="P:response to transforming growth factor beta"/>
    <property type="evidence" value="ECO:0000315"/>
    <property type="project" value="RGD"/>
</dbReference>
<dbReference type="GO" id="GO:0009411">
    <property type="term" value="P:response to UV"/>
    <property type="evidence" value="ECO:0000266"/>
    <property type="project" value="RGD"/>
</dbReference>
<dbReference type="GO" id="GO:0060021">
    <property type="term" value="P:roof of mouth development"/>
    <property type="evidence" value="ECO:0000266"/>
    <property type="project" value="RGD"/>
</dbReference>
<dbReference type="GO" id="GO:0048863">
    <property type="term" value="P:stem cell differentiation"/>
    <property type="evidence" value="ECO:0000266"/>
    <property type="project" value="RGD"/>
</dbReference>
<dbReference type="GO" id="GO:0072089">
    <property type="term" value="P:stem cell proliferation"/>
    <property type="evidence" value="ECO:0000266"/>
    <property type="project" value="RGD"/>
</dbReference>
<dbReference type="GO" id="GO:0045064">
    <property type="term" value="P:T-helper 2 cell differentiation"/>
    <property type="evidence" value="ECO:0000266"/>
    <property type="project" value="RGD"/>
</dbReference>
<dbReference type="GO" id="GO:0045815">
    <property type="term" value="P:transcription initiation-coupled chromatin remodeling"/>
    <property type="evidence" value="ECO:0000266"/>
    <property type="project" value="RGD"/>
</dbReference>
<dbReference type="GO" id="GO:0003309">
    <property type="term" value="P:type B pancreatic cell differentiation"/>
    <property type="evidence" value="ECO:0000315"/>
    <property type="project" value="RGD"/>
</dbReference>
<dbReference type="GO" id="GO:0044342">
    <property type="term" value="P:type B pancreatic cell proliferation"/>
    <property type="evidence" value="ECO:0000266"/>
    <property type="project" value="RGD"/>
</dbReference>
<dbReference type="CDD" id="cd14456">
    <property type="entry name" value="Menin"/>
    <property type="match status" value="1"/>
</dbReference>
<dbReference type="InterPro" id="IPR007747">
    <property type="entry name" value="Menin"/>
</dbReference>
<dbReference type="PANTHER" id="PTHR12693">
    <property type="entry name" value="MENIN"/>
    <property type="match status" value="1"/>
</dbReference>
<dbReference type="PANTHER" id="PTHR12693:SF3">
    <property type="entry name" value="MENIN"/>
    <property type="match status" value="1"/>
</dbReference>
<dbReference type="Pfam" id="PF05053">
    <property type="entry name" value="Menin"/>
    <property type="match status" value="2"/>
</dbReference>
<name>MEN1_RAT</name>
<comment type="function">
    <text evidence="1 2 6">Essential component of a MLL/SET1 histone methyltransferase (HMT) complex, a complex that specifically methylates 'Lys-4' of histone H3 (H3K4). Functions as a transcriptional regulator. Binds to the TERT promoter and represses telomerase expression. Represses JUND-mediated transcriptional activation on AP1 sites, as well as that mediated by NFKB subunit RELA. Positively regulates HOXC8 and HOXC6 gene expression. May be involved in normal hematopoiesis through the activation of HOXA9 expression. May be involved in DNA repair (By similarity). Plays a role in TGFB1-mediated inhibition of cell-proliferation, possibly regulating SMAD3 transcriptional activity.</text>
</comment>
<comment type="subunit">
    <text evidence="1 6">Component of the MLL-HCF complex, at least composed of KMT2A/MLL1, MEN1, ASH2L, RBBP5, DPY30, WDR5, HCFC1 and HCFC2 (By similarity). Component of the menin-associated histone methyltransferase complex, at least composed of KMT2B/MLL4, MEN1, ASH2L, RBBP5, DPY30 and WDR5 (By similarity). Interacts with POLR2B (By similarity). Interacts with POLR2A phosphorylated at 'Ser-5', but not with the unphosphorylated, nor 'Ser-2' phosphorylated POLR2A forms (By similarity). Interacts with FANCD2 and DBF4 (By similarity). Interacts with SMAD3, but not with SMAD2, nor SMAD4 (PubMed:11274402). Directly interacts with NFKB1, NFKB2 and RELA (By similarity). Interacts with JUND (via MBM motif); inhibits the interaction of JUND with MAPK10 and the phosphorylation of JUND by MAP kinases MAPK8 and MAPK10 (By similarity). Interacts with KMT2A (via MBM motif) (By similarity). The KMT2A-MEN1 complex interacts with PSIP1 with a greater affinity as MEN1 enhances interaction of KMT2A with PSIP1 (By similarity).</text>
</comment>
<comment type="subcellular location">
    <subcellularLocation>
        <location evidence="5">Nucleus</location>
    </subcellularLocation>
</comment>
<comment type="alternative products">
    <event type="alternative splicing"/>
    <isoform>
        <id>Q9WVR8-1</id>
        <name>1</name>
        <sequence type="displayed"/>
    </isoform>
    <isoform>
        <id>Q9WVR8-2</id>
        <name>2</name>
        <sequence type="described" ref="VSP_041103"/>
    </isoform>
</comment>
<comment type="tissue specificity">
    <text evidence="4 5">Widely expressed, including in the pituitary, brain, large intestine, spleen, kidney, adrenal gland, ovary, testis, thymus, lung, epididymis, bone marrow, pancreatic islets and placenta.</text>
</comment>
<comment type="developmental stage">
    <text evidence="5">In the brain, highest expression at 16 dpc to 18 dpc. Expression decreases from 20 dpc onward.</text>
</comment>
<comment type="induction">
    <text evidence="6">By TGFB1.</text>
</comment>
<proteinExistence type="evidence at protein level"/>
<protein>
    <recommendedName>
        <fullName>Menin</fullName>
    </recommendedName>
</protein>
<organism>
    <name type="scientific">Rattus norvegicus</name>
    <name type="common">Rat</name>
    <dbReference type="NCBI Taxonomy" id="10116"/>
    <lineage>
        <taxon>Eukaryota</taxon>
        <taxon>Metazoa</taxon>
        <taxon>Chordata</taxon>
        <taxon>Craniata</taxon>
        <taxon>Vertebrata</taxon>
        <taxon>Euteleostomi</taxon>
        <taxon>Mammalia</taxon>
        <taxon>Eutheria</taxon>
        <taxon>Euarchontoglires</taxon>
        <taxon>Glires</taxon>
        <taxon>Rodentia</taxon>
        <taxon>Myomorpha</taxon>
        <taxon>Muroidea</taxon>
        <taxon>Muridae</taxon>
        <taxon>Murinae</taxon>
        <taxon>Rattus</taxon>
    </lineage>
</organism>
<gene>
    <name type="primary">Men1</name>
</gene>
<keyword id="KW-0025">Alternative splicing</keyword>
<keyword id="KW-0156">Chromatin regulator</keyword>
<keyword id="KW-0238">DNA-binding</keyword>
<keyword id="KW-0539">Nucleus</keyword>
<keyword id="KW-0597">Phosphoprotein</keyword>
<keyword id="KW-1185">Reference proteome</keyword>
<keyword id="KW-0678">Repressor</keyword>
<keyword id="KW-0804">Transcription</keyword>
<keyword id="KW-0805">Transcription regulation</keyword>
<feature type="chain" id="PRO_0000408473" description="Menin">
    <location>
        <begin position="1"/>
        <end position="610"/>
    </location>
</feature>
<feature type="region of interest" description="Interaction with FANCD2" evidence="1">
    <location>
        <begin position="214"/>
        <end position="390"/>
    </location>
</feature>
<feature type="region of interest" description="Disordered" evidence="3">
    <location>
        <begin position="460"/>
        <end position="552"/>
    </location>
</feature>
<feature type="compositionally biased region" description="Basic and acidic residues" evidence="3">
    <location>
        <begin position="484"/>
        <end position="500"/>
    </location>
</feature>
<feature type="modified residue" description="Phosphoserine" evidence="1">
    <location>
        <position position="487"/>
    </location>
</feature>
<feature type="modified residue" description="Phosphoserine" evidence="8">
    <location>
        <position position="543"/>
    </location>
</feature>
<feature type="modified residue" description="Phosphothreonine" evidence="1">
    <location>
        <position position="594"/>
    </location>
</feature>
<feature type="splice variant" id="VSP_041103" description="In isoform 2." evidence="7">
    <location>
        <begin position="396"/>
        <end position="450"/>
    </location>
</feature>
<sequence length="610" mass="67335">MGLKAAQKTLFPLRSIDDVVRLFAAELGREEPDLVLLSLVLGFVEHFLAVNRVIPTNVPELTFQPSPAPDPPGGLTYFPVADLSIIAALYARFTAQIRGAVDLSLYPREGGVSSRELVKKVSDVIWNSLSRSYFKDRAHIQSLFSFITGTKLDSSGVAFAVVGACQALGLRDVHLALSEDHAWVVFGSNGEQTAEVTWHGKGNEDRRGQTVNAGVAERSWLYLKGSYMRCDRKMEVAFMVCAINPSIDLHTDSLELLQLQQKLLWLLYDLGHLERYPMALGNLADLEELEPTPGRPDPLTLYHKGIASAKTYYQDEHIYPYMYLAGYHCRNRNVREALQAWADTATVIQDYNYCREDEEIYKEFFEVANDVIPNLLKEAASLLEAGEERPGEQAQGTQGQGSALQDPECFAHLLRFYDGICKWEEGSPTPVLHVGWATFLVQSLGRFEGQVRQKVHIVSREAEAAEAEEPWGDEAREGRRRGPRRESKPEEPPPPKKPALDKGPGSGQSAGSGPPRKTSGTVSGTARGTEVSSAAQAPAPAASPPPEGPVLTFQSEKMKGMKELLVATKINSSAIKLQLTAQSQVQMKKQKVSTPSDYTLSFLKRQRKGL</sequence>
<accession>Q9WVR8</accession>
<accession>D3ZCA2</accession>